<gene>
    <name evidence="1" type="primary">ispH</name>
    <name type="synonym">lytB</name>
    <name type="ordered locus">NFA_47950</name>
</gene>
<feature type="chain" id="PRO_0000128847" description="4-hydroxy-3-methylbut-2-enyl diphosphate reductase">
    <location>
        <begin position="1"/>
        <end position="336"/>
    </location>
</feature>
<feature type="active site" description="Proton donor" evidence="1">
    <location>
        <position position="151"/>
    </location>
</feature>
<feature type="binding site" evidence="1">
    <location>
        <position position="37"/>
    </location>
    <ligand>
        <name>[4Fe-4S] cluster</name>
        <dbReference type="ChEBI" id="CHEBI:49883"/>
    </ligand>
</feature>
<feature type="binding site" evidence="1">
    <location>
        <position position="66"/>
    </location>
    <ligand>
        <name>(2E)-4-hydroxy-3-methylbut-2-enyl diphosphate</name>
        <dbReference type="ChEBI" id="CHEBI:128753"/>
    </ligand>
</feature>
<feature type="binding site" evidence="1">
    <location>
        <position position="66"/>
    </location>
    <ligand>
        <name>dimethylallyl diphosphate</name>
        <dbReference type="ChEBI" id="CHEBI:57623"/>
    </ligand>
</feature>
<feature type="binding site" evidence="1">
    <location>
        <position position="66"/>
    </location>
    <ligand>
        <name>isopentenyl diphosphate</name>
        <dbReference type="ChEBI" id="CHEBI:128769"/>
    </ligand>
</feature>
<feature type="binding site" evidence="1">
    <location>
        <position position="99"/>
    </location>
    <ligand>
        <name>(2E)-4-hydroxy-3-methylbut-2-enyl diphosphate</name>
        <dbReference type="ChEBI" id="CHEBI:128753"/>
    </ligand>
</feature>
<feature type="binding site" evidence="1">
    <location>
        <position position="99"/>
    </location>
    <ligand>
        <name>dimethylallyl diphosphate</name>
        <dbReference type="ChEBI" id="CHEBI:57623"/>
    </ligand>
</feature>
<feature type="binding site" evidence="1">
    <location>
        <position position="99"/>
    </location>
    <ligand>
        <name>isopentenyl diphosphate</name>
        <dbReference type="ChEBI" id="CHEBI:128769"/>
    </ligand>
</feature>
<feature type="binding site" evidence="1">
    <location>
        <position position="121"/>
    </location>
    <ligand>
        <name>[4Fe-4S] cluster</name>
        <dbReference type="ChEBI" id="CHEBI:49883"/>
    </ligand>
</feature>
<feature type="binding site" evidence="1">
    <location>
        <position position="149"/>
    </location>
    <ligand>
        <name>(2E)-4-hydroxy-3-methylbut-2-enyl diphosphate</name>
        <dbReference type="ChEBI" id="CHEBI:128753"/>
    </ligand>
</feature>
<feature type="binding site" evidence="1">
    <location>
        <position position="149"/>
    </location>
    <ligand>
        <name>dimethylallyl diphosphate</name>
        <dbReference type="ChEBI" id="CHEBI:57623"/>
    </ligand>
</feature>
<feature type="binding site" evidence="1">
    <location>
        <position position="149"/>
    </location>
    <ligand>
        <name>isopentenyl diphosphate</name>
        <dbReference type="ChEBI" id="CHEBI:128769"/>
    </ligand>
</feature>
<feature type="binding site" evidence="1">
    <location>
        <position position="189"/>
    </location>
    <ligand>
        <name>(2E)-4-hydroxy-3-methylbut-2-enyl diphosphate</name>
        <dbReference type="ChEBI" id="CHEBI:128753"/>
    </ligand>
</feature>
<feature type="binding site" evidence="1">
    <location>
        <position position="219"/>
    </location>
    <ligand>
        <name>[4Fe-4S] cluster</name>
        <dbReference type="ChEBI" id="CHEBI:49883"/>
    </ligand>
</feature>
<feature type="binding site" evidence="1">
    <location>
        <position position="247"/>
    </location>
    <ligand>
        <name>(2E)-4-hydroxy-3-methylbut-2-enyl diphosphate</name>
        <dbReference type="ChEBI" id="CHEBI:128753"/>
    </ligand>
</feature>
<feature type="binding site" evidence="1">
    <location>
        <position position="247"/>
    </location>
    <ligand>
        <name>dimethylallyl diphosphate</name>
        <dbReference type="ChEBI" id="CHEBI:57623"/>
    </ligand>
</feature>
<feature type="binding site" evidence="1">
    <location>
        <position position="247"/>
    </location>
    <ligand>
        <name>isopentenyl diphosphate</name>
        <dbReference type="ChEBI" id="CHEBI:128769"/>
    </ligand>
</feature>
<feature type="binding site" evidence="1">
    <location>
        <position position="248"/>
    </location>
    <ligand>
        <name>(2E)-4-hydroxy-3-methylbut-2-enyl diphosphate</name>
        <dbReference type="ChEBI" id="CHEBI:128753"/>
    </ligand>
</feature>
<feature type="binding site" evidence="1">
    <location>
        <position position="248"/>
    </location>
    <ligand>
        <name>dimethylallyl diphosphate</name>
        <dbReference type="ChEBI" id="CHEBI:57623"/>
    </ligand>
</feature>
<feature type="binding site" evidence="1">
    <location>
        <position position="248"/>
    </location>
    <ligand>
        <name>isopentenyl diphosphate</name>
        <dbReference type="ChEBI" id="CHEBI:128769"/>
    </ligand>
</feature>
<feature type="binding site" evidence="1">
    <location>
        <position position="249"/>
    </location>
    <ligand>
        <name>(2E)-4-hydroxy-3-methylbut-2-enyl diphosphate</name>
        <dbReference type="ChEBI" id="CHEBI:128753"/>
    </ligand>
</feature>
<feature type="binding site" evidence="1">
    <location>
        <position position="249"/>
    </location>
    <ligand>
        <name>dimethylallyl diphosphate</name>
        <dbReference type="ChEBI" id="CHEBI:57623"/>
    </ligand>
</feature>
<feature type="binding site" evidence="1">
    <location>
        <position position="249"/>
    </location>
    <ligand>
        <name>isopentenyl diphosphate</name>
        <dbReference type="ChEBI" id="CHEBI:128769"/>
    </ligand>
</feature>
<feature type="binding site" evidence="1">
    <location>
        <position position="292"/>
    </location>
    <ligand>
        <name>(2E)-4-hydroxy-3-methylbut-2-enyl diphosphate</name>
        <dbReference type="ChEBI" id="CHEBI:128753"/>
    </ligand>
</feature>
<feature type="binding site" evidence="1">
    <location>
        <position position="292"/>
    </location>
    <ligand>
        <name>dimethylallyl diphosphate</name>
        <dbReference type="ChEBI" id="CHEBI:57623"/>
    </ligand>
</feature>
<feature type="binding site" evidence="1">
    <location>
        <position position="292"/>
    </location>
    <ligand>
        <name>isopentenyl diphosphate</name>
        <dbReference type="ChEBI" id="CHEBI:128769"/>
    </ligand>
</feature>
<proteinExistence type="inferred from homology"/>
<keyword id="KW-0004">4Fe-4S</keyword>
<keyword id="KW-0408">Iron</keyword>
<keyword id="KW-0411">Iron-sulfur</keyword>
<keyword id="KW-0414">Isoprene biosynthesis</keyword>
<keyword id="KW-0479">Metal-binding</keyword>
<keyword id="KW-0560">Oxidoreductase</keyword>
<keyword id="KW-1185">Reference proteome</keyword>
<evidence type="ECO:0000255" key="1">
    <source>
        <dbReference type="HAMAP-Rule" id="MF_00191"/>
    </source>
</evidence>
<sequence length="336" mass="36486">MSSAIPLNVGIARSAGTATVDADTAKRVLLAEPRGYCAGVDRAVETVEKALEKHGAPIYVRKEIVHNRHVVETLRERGVVFVDDTAEVPEGAVVVFSAHGVSPAVHEAAAARNLHTIDATCPLVTKVHQEAKRFARDDYDILLIGHEGHEEVEGTAGEAPEHVQLVDGPDAVDRVRVRDENKVIWLSQTTLSVDETMETVQRLRERFPSLQDPPSDDICYATQNRQVAVKAMAPECDLVIVVGSRNSSNSVRLVEVALNAGAKAAHLVDYAREVDPAWLEGVRTIGITSGASVPEILVRGVLDMLAEHGYADVQPVTTANETLVFALPRELRTTRR</sequence>
<dbReference type="EC" id="1.17.7.4" evidence="1"/>
<dbReference type="EMBL" id="AP006618">
    <property type="protein sequence ID" value="BAD59647.1"/>
    <property type="molecule type" value="Genomic_DNA"/>
</dbReference>
<dbReference type="RefSeq" id="WP_011211331.1">
    <property type="nucleotide sequence ID" value="NC_006361.1"/>
</dbReference>
<dbReference type="SMR" id="Q5YQ94"/>
<dbReference type="STRING" id="247156.NFA_47950"/>
<dbReference type="GeneID" id="61135392"/>
<dbReference type="KEGG" id="nfa:NFA_47950"/>
<dbReference type="eggNOG" id="COG0761">
    <property type="taxonomic scope" value="Bacteria"/>
</dbReference>
<dbReference type="HOGENOM" id="CLU_027486_1_0_11"/>
<dbReference type="OrthoDB" id="9804068at2"/>
<dbReference type="UniPathway" id="UPA00056">
    <property type="reaction ID" value="UER00097"/>
</dbReference>
<dbReference type="UniPathway" id="UPA00059">
    <property type="reaction ID" value="UER00105"/>
</dbReference>
<dbReference type="Proteomes" id="UP000006820">
    <property type="component" value="Chromosome"/>
</dbReference>
<dbReference type="GO" id="GO:0051539">
    <property type="term" value="F:4 iron, 4 sulfur cluster binding"/>
    <property type="evidence" value="ECO:0007669"/>
    <property type="project" value="UniProtKB-UniRule"/>
</dbReference>
<dbReference type="GO" id="GO:0051745">
    <property type="term" value="F:4-hydroxy-3-methylbut-2-enyl diphosphate reductase activity"/>
    <property type="evidence" value="ECO:0007669"/>
    <property type="project" value="UniProtKB-UniRule"/>
</dbReference>
<dbReference type="GO" id="GO:0046872">
    <property type="term" value="F:metal ion binding"/>
    <property type="evidence" value="ECO:0007669"/>
    <property type="project" value="UniProtKB-KW"/>
</dbReference>
<dbReference type="GO" id="GO:0050992">
    <property type="term" value="P:dimethylallyl diphosphate biosynthetic process"/>
    <property type="evidence" value="ECO:0007669"/>
    <property type="project" value="UniProtKB-UniRule"/>
</dbReference>
<dbReference type="GO" id="GO:0019288">
    <property type="term" value="P:isopentenyl diphosphate biosynthetic process, methylerythritol 4-phosphate pathway"/>
    <property type="evidence" value="ECO:0007669"/>
    <property type="project" value="UniProtKB-UniRule"/>
</dbReference>
<dbReference type="GO" id="GO:0016114">
    <property type="term" value="P:terpenoid biosynthetic process"/>
    <property type="evidence" value="ECO:0007669"/>
    <property type="project" value="UniProtKB-UniRule"/>
</dbReference>
<dbReference type="CDD" id="cd13944">
    <property type="entry name" value="lytB_ispH"/>
    <property type="match status" value="1"/>
</dbReference>
<dbReference type="Gene3D" id="3.40.50.11270">
    <property type="match status" value="1"/>
</dbReference>
<dbReference type="Gene3D" id="3.40.1010.20">
    <property type="entry name" value="4-hydroxy-3-methylbut-2-enyl diphosphate reductase, catalytic domain"/>
    <property type="match status" value="2"/>
</dbReference>
<dbReference type="HAMAP" id="MF_00191">
    <property type="entry name" value="IspH"/>
    <property type="match status" value="1"/>
</dbReference>
<dbReference type="InterPro" id="IPR003451">
    <property type="entry name" value="LytB/IspH"/>
</dbReference>
<dbReference type="NCBIfam" id="TIGR00216">
    <property type="entry name" value="ispH_lytB"/>
    <property type="match status" value="1"/>
</dbReference>
<dbReference type="NCBIfam" id="NF002188">
    <property type="entry name" value="PRK01045.1-2"/>
    <property type="match status" value="1"/>
</dbReference>
<dbReference type="NCBIfam" id="NF002189">
    <property type="entry name" value="PRK01045.1-3"/>
    <property type="match status" value="1"/>
</dbReference>
<dbReference type="NCBIfam" id="NF002190">
    <property type="entry name" value="PRK01045.1-4"/>
    <property type="match status" value="1"/>
</dbReference>
<dbReference type="PANTHER" id="PTHR30426">
    <property type="entry name" value="4-HYDROXY-3-METHYLBUT-2-ENYL DIPHOSPHATE REDUCTASE"/>
    <property type="match status" value="1"/>
</dbReference>
<dbReference type="PANTHER" id="PTHR30426:SF0">
    <property type="entry name" value="4-HYDROXY-3-METHYLBUT-2-ENYL DIPHOSPHATE REDUCTASE"/>
    <property type="match status" value="1"/>
</dbReference>
<dbReference type="Pfam" id="PF02401">
    <property type="entry name" value="LYTB"/>
    <property type="match status" value="1"/>
</dbReference>
<accession>Q5YQ94</accession>
<comment type="function">
    <text evidence="1">Catalyzes the conversion of 1-hydroxy-2-methyl-2-(E)-butenyl 4-diphosphate (HMBPP) into a mixture of isopentenyl diphosphate (IPP) and dimethylallyl diphosphate (DMAPP). Acts in the terminal step of the DOXP/MEP pathway for isoprenoid precursor biosynthesis.</text>
</comment>
<comment type="catalytic activity">
    <reaction evidence="1">
        <text>isopentenyl diphosphate + 2 oxidized [2Fe-2S]-[ferredoxin] + H2O = (2E)-4-hydroxy-3-methylbut-2-enyl diphosphate + 2 reduced [2Fe-2S]-[ferredoxin] + 2 H(+)</text>
        <dbReference type="Rhea" id="RHEA:24488"/>
        <dbReference type="Rhea" id="RHEA-COMP:10000"/>
        <dbReference type="Rhea" id="RHEA-COMP:10001"/>
        <dbReference type="ChEBI" id="CHEBI:15377"/>
        <dbReference type="ChEBI" id="CHEBI:15378"/>
        <dbReference type="ChEBI" id="CHEBI:33737"/>
        <dbReference type="ChEBI" id="CHEBI:33738"/>
        <dbReference type="ChEBI" id="CHEBI:128753"/>
        <dbReference type="ChEBI" id="CHEBI:128769"/>
        <dbReference type="EC" id="1.17.7.4"/>
    </reaction>
</comment>
<comment type="catalytic activity">
    <reaction evidence="1">
        <text>dimethylallyl diphosphate + 2 oxidized [2Fe-2S]-[ferredoxin] + H2O = (2E)-4-hydroxy-3-methylbut-2-enyl diphosphate + 2 reduced [2Fe-2S]-[ferredoxin] + 2 H(+)</text>
        <dbReference type="Rhea" id="RHEA:24825"/>
        <dbReference type="Rhea" id="RHEA-COMP:10000"/>
        <dbReference type="Rhea" id="RHEA-COMP:10001"/>
        <dbReference type="ChEBI" id="CHEBI:15377"/>
        <dbReference type="ChEBI" id="CHEBI:15378"/>
        <dbReference type="ChEBI" id="CHEBI:33737"/>
        <dbReference type="ChEBI" id="CHEBI:33738"/>
        <dbReference type="ChEBI" id="CHEBI:57623"/>
        <dbReference type="ChEBI" id="CHEBI:128753"/>
        <dbReference type="EC" id="1.17.7.4"/>
    </reaction>
</comment>
<comment type="cofactor">
    <cofactor evidence="1">
        <name>[4Fe-4S] cluster</name>
        <dbReference type="ChEBI" id="CHEBI:49883"/>
    </cofactor>
    <text evidence="1">Binds 1 [4Fe-4S] cluster per subunit.</text>
</comment>
<comment type="pathway">
    <text evidence="1">Isoprenoid biosynthesis; dimethylallyl diphosphate biosynthesis; dimethylallyl diphosphate from (2E)-4-hydroxy-3-methylbutenyl diphosphate: step 1/1.</text>
</comment>
<comment type="pathway">
    <text evidence="1">Isoprenoid biosynthesis; isopentenyl diphosphate biosynthesis via DXP pathway; isopentenyl diphosphate from 1-deoxy-D-xylulose 5-phosphate: step 6/6.</text>
</comment>
<comment type="similarity">
    <text evidence="1">Belongs to the IspH family.</text>
</comment>
<protein>
    <recommendedName>
        <fullName evidence="1">4-hydroxy-3-methylbut-2-enyl diphosphate reductase</fullName>
        <shortName evidence="1">HMBPP reductase</shortName>
        <ecNumber evidence="1">1.17.7.4</ecNumber>
    </recommendedName>
</protein>
<reference key="1">
    <citation type="journal article" date="2004" name="Proc. Natl. Acad. Sci. U.S.A.">
        <title>The complete genomic sequence of Nocardia farcinica IFM 10152.</title>
        <authorList>
            <person name="Ishikawa J."/>
            <person name="Yamashita A."/>
            <person name="Mikami Y."/>
            <person name="Hoshino Y."/>
            <person name="Kurita H."/>
            <person name="Hotta K."/>
            <person name="Shiba T."/>
            <person name="Hattori M."/>
        </authorList>
    </citation>
    <scope>NUCLEOTIDE SEQUENCE [LARGE SCALE GENOMIC DNA]</scope>
    <source>
        <strain>IFM 10152</strain>
    </source>
</reference>
<organism>
    <name type="scientific">Nocardia farcinica (strain IFM 10152)</name>
    <dbReference type="NCBI Taxonomy" id="247156"/>
    <lineage>
        <taxon>Bacteria</taxon>
        <taxon>Bacillati</taxon>
        <taxon>Actinomycetota</taxon>
        <taxon>Actinomycetes</taxon>
        <taxon>Mycobacteriales</taxon>
        <taxon>Nocardiaceae</taxon>
        <taxon>Nocardia</taxon>
    </lineage>
</organism>
<name>ISPH_NOCFA</name>